<dbReference type="EMBL" id="CR378671">
    <property type="protein sequence ID" value="CAG20965.1"/>
    <property type="molecule type" value="Genomic_DNA"/>
</dbReference>
<dbReference type="RefSeq" id="WP_006233037.1">
    <property type="nucleotide sequence ID" value="NC_006370.1"/>
</dbReference>
<dbReference type="SMR" id="Q6LP11"/>
<dbReference type="STRING" id="298386.PBPRA2586"/>
<dbReference type="KEGG" id="ppr:PBPRA2586"/>
<dbReference type="eggNOG" id="COG3082">
    <property type="taxonomic scope" value="Bacteria"/>
</dbReference>
<dbReference type="HOGENOM" id="CLU_175457_0_0_6"/>
<dbReference type="Proteomes" id="UP000000593">
    <property type="component" value="Chromosome 1"/>
</dbReference>
<dbReference type="Gene3D" id="1.10.3390.10">
    <property type="entry name" value="YejL-like"/>
    <property type="match status" value="1"/>
</dbReference>
<dbReference type="HAMAP" id="MF_00816">
    <property type="entry name" value="UPF0352"/>
    <property type="match status" value="1"/>
</dbReference>
<dbReference type="InterPro" id="IPR009857">
    <property type="entry name" value="UPF0352"/>
</dbReference>
<dbReference type="InterPro" id="IPR023202">
    <property type="entry name" value="YejL_sf"/>
</dbReference>
<dbReference type="NCBIfam" id="NF010242">
    <property type="entry name" value="PRK13689.1"/>
    <property type="match status" value="1"/>
</dbReference>
<dbReference type="Pfam" id="PF07208">
    <property type="entry name" value="DUF1414"/>
    <property type="match status" value="1"/>
</dbReference>
<dbReference type="PIRSF" id="PIRSF006188">
    <property type="entry name" value="UCP006188"/>
    <property type="match status" value="1"/>
</dbReference>
<dbReference type="SUPFAM" id="SSF158651">
    <property type="entry name" value="YejL-like"/>
    <property type="match status" value="1"/>
</dbReference>
<gene>
    <name type="ordered locus">PBPRA2586</name>
</gene>
<feature type="chain" id="PRO_0000201793" description="UPF0352 protein PBPRA2586">
    <location>
        <begin position="1"/>
        <end position="70"/>
    </location>
</feature>
<sequence>MPITSKYTNQKIEQIISDVFDVLEKHDASAELALMVVGNIATNIINADVPASKKKEIAEQFSQALLKSTK</sequence>
<protein>
    <recommendedName>
        <fullName evidence="1">UPF0352 protein PBPRA2586</fullName>
    </recommendedName>
</protein>
<accession>Q6LP11</accession>
<reference key="1">
    <citation type="journal article" date="2005" name="Science">
        <title>Life at depth: Photobacterium profundum genome sequence and expression analysis.</title>
        <authorList>
            <person name="Vezzi A."/>
            <person name="Campanaro S."/>
            <person name="D'Angelo M."/>
            <person name="Simonato F."/>
            <person name="Vitulo N."/>
            <person name="Lauro F.M."/>
            <person name="Cestaro A."/>
            <person name="Malacrida G."/>
            <person name="Simionati B."/>
            <person name="Cannata N."/>
            <person name="Romualdi C."/>
            <person name="Bartlett D.H."/>
            <person name="Valle G."/>
        </authorList>
    </citation>
    <scope>NUCLEOTIDE SEQUENCE [LARGE SCALE GENOMIC DNA]</scope>
    <source>
        <strain>ATCC BAA-1253 / SS9</strain>
    </source>
</reference>
<name>Y2586_PHOPR</name>
<evidence type="ECO:0000255" key="1">
    <source>
        <dbReference type="HAMAP-Rule" id="MF_00816"/>
    </source>
</evidence>
<proteinExistence type="inferred from homology"/>
<comment type="similarity">
    <text evidence="1">Belongs to the UPF0352 family.</text>
</comment>
<organism>
    <name type="scientific">Photobacterium profundum (strain SS9)</name>
    <dbReference type="NCBI Taxonomy" id="298386"/>
    <lineage>
        <taxon>Bacteria</taxon>
        <taxon>Pseudomonadati</taxon>
        <taxon>Pseudomonadota</taxon>
        <taxon>Gammaproteobacteria</taxon>
        <taxon>Vibrionales</taxon>
        <taxon>Vibrionaceae</taxon>
        <taxon>Photobacterium</taxon>
    </lineage>
</organism>
<keyword id="KW-1185">Reference proteome</keyword>